<protein>
    <recommendedName>
        <fullName evidence="1">D-ribose pyranase</fullName>
        <ecNumber evidence="1">5.4.99.62</ecNumber>
    </recommendedName>
</protein>
<evidence type="ECO:0000255" key="1">
    <source>
        <dbReference type="HAMAP-Rule" id="MF_01661"/>
    </source>
</evidence>
<accession>A9VEU6</accession>
<dbReference type="EC" id="5.4.99.62" evidence="1"/>
<dbReference type="EMBL" id="CP000903">
    <property type="protein sequence ID" value="ABY41845.1"/>
    <property type="molecule type" value="Genomic_DNA"/>
</dbReference>
<dbReference type="RefSeq" id="WP_002125248.1">
    <property type="nucleotide sequence ID" value="NC_010184.1"/>
</dbReference>
<dbReference type="SMR" id="A9VEU6"/>
<dbReference type="GeneID" id="66264282"/>
<dbReference type="KEGG" id="bwe:BcerKBAB4_0580"/>
<dbReference type="eggNOG" id="COG1869">
    <property type="taxonomic scope" value="Bacteria"/>
</dbReference>
<dbReference type="HOGENOM" id="CLU_135498_0_0_9"/>
<dbReference type="UniPathway" id="UPA00916">
    <property type="reaction ID" value="UER00888"/>
</dbReference>
<dbReference type="Proteomes" id="UP000002154">
    <property type="component" value="Chromosome"/>
</dbReference>
<dbReference type="GO" id="GO:0005829">
    <property type="term" value="C:cytosol"/>
    <property type="evidence" value="ECO:0007669"/>
    <property type="project" value="TreeGrafter"/>
</dbReference>
<dbReference type="GO" id="GO:0062193">
    <property type="term" value="F:D-ribose pyranase activity"/>
    <property type="evidence" value="ECO:0007669"/>
    <property type="project" value="UniProtKB-EC"/>
</dbReference>
<dbReference type="GO" id="GO:0016872">
    <property type="term" value="F:intramolecular lyase activity"/>
    <property type="evidence" value="ECO:0007669"/>
    <property type="project" value="UniProtKB-UniRule"/>
</dbReference>
<dbReference type="GO" id="GO:0048029">
    <property type="term" value="F:monosaccharide binding"/>
    <property type="evidence" value="ECO:0007669"/>
    <property type="project" value="InterPro"/>
</dbReference>
<dbReference type="GO" id="GO:0019303">
    <property type="term" value="P:D-ribose catabolic process"/>
    <property type="evidence" value="ECO:0007669"/>
    <property type="project" value="UniProtKB-UniRule"/>
</dbReference>
<dbReference type="FunFam" id="3.40.1650.10:FF:000003">
    <property type="entry name" value="D-ribose pyranase"/>
    <property type="match status" value="1"/>
</dbReference>
<dbReference type="Gene3D" id="3.40.1650.10">
    <property type="entry name" value="RbsD-like domain"/>
    <property type="match status" value="1"/>
</dbReference>
<dbReference type="HAMAP" id="MF_01661">
    <property type="entry name" value="D_rib_pyranase"/>
    <property type="match status" value="1"/>
</dbReference>
<dbReference type="InterPro" id="IPR023064">
    <property type="entry name" value="D-ribose_pyranase"/>
</dbReference>
<dbReference type="InterPro" id="IPR023750">
    <property type="entry name" value="RbsD-like_sf"/>
</dbReference>
<dbReference type="InterPro" id="IPR007721">
    <property type="entry name" value="RbsD_FucU"/>
</dbReference>
<dbReference type="NCBIfam" id="NF008761">
    <property type="entry name" value="PRK11797.1"/>
    <property type="match status" value="1"/>
</dbReference>
<dbReference type="PANTHER" id="PTHR37831">
    <property type="entry name" value="D-RIBOSE PYRANASE"/>
    <property type="match status" value="1"/>
</dbReference>
<dbReference type="PANTHER" id="PTHR37831:SF1">
    <property type="entry name" value="D-RIBOSE PYRANASE"/>
    <property type="match status" value="1"/>
</dbReference>
<dbReference type="Pfam" id="PF05025">
    <property type="entry name" value="RbsD_FucU"/>
    <property type="match status" value="1"/>
</dbReference>
<dbReference type="SUPFAM" id="SSF102546">
    <property type="entry name" value="RbsD-like"/>
    <property type="match status" value="1"/>
</dbReference>
<reference key="1">
    <citation type="journal article" date="2008" name="Chem. Biol. Interact.">
        <title>Extending the Bacillus cereus group genomics to putative food-borne pathogens of different toxicity.</title>
        <authorList>
            <person name="Lapidus A."/>
            <person name="Goltsman E."/>
            <person name="Auger S."/>
            <person name="Galleron N."/>
            <person name="Segurens B."/>
            <person name="Dossat C."/>
            <person name="Land M.L."/>
            <person name="Broussolle V."/>
            <person name="Brillard J."/>
            <person name="Guinebretiere M.-H."/>
            <person name="Sanchis V."/>
            <person name="Nguen-the C."/>
            <person name="Lereclus D."/>
            <person name="Richardson P."/>
            <person name="Wincker P."/>
            <person name="Weissenbach J."/>
            <person name="Ehrlich S.D."/>
            <person name="Sorokin A."/>
        </authorList>
    </citation>
    <scope>NUCLEOTIDE SEQUENCE [LARGE SCALE GENOMIC DNA]</scope>
    <source>
        <strain>KBAB4</strain>
    </source>
</reference>
<sequence>MKKHGVLNSEIAAVLASLGHTDTIVIADCGLPIPDGVKRIDLAVEIGKPSFLDVLQVVADDMAIEKVMLAEEVIINNAEVNKEVEMRLIEPAFEYVSHKEFKEHTKRAKAIIRTGEATPYANVILHAGVIF</sequence>
<keyword id="KW-0119">Carbohydrate metabolism</keyword>
<keyword id="KW-0963">Cytoplasm</keyword>
<keyword id="KW-0413">Isomerase</keyword>
<organism>
    <name type="scientific">Bacillus mycoides (strain KBAB4)</name>
    <name type="common">Bacillus weihenstephanensis</name>
    <dbReference type="NCBI Taxonomy" id="315730"/>
    <lineage>
        <taxon>Bacteria</taxon>
        <taxon>Bacillati</taxon>
        <taxon>Bacillota</taxon>
        <taxon>Bacilli</taxon>
        <taxon>Bacillales</taxon>
        <taxon>Bacillaceae</taxon>
        <taxon>Bacillus</taxon>
        <taxon>Bacillus cereus group</taxon>
    </lineage>
</organism>
<name>RBSD_BACMK</name>
<feature type="chain" id="PRO_0000346181" description="D-ribose pyranase">
    <location>
        <begin position="1"/>
        <end position="131"/>
    </location>
</feature>
<feature type="active site" description="Proton donor" evidence="1">
    <location>
        <position position="20"/>
    </location>
</feature>
<feature type="binding site" evidence="1">
    <location>
        <position position="28"/>
    </location>
    <ligand>
        <name>substrate</name>
    </ligand>
</feature>
<feature type="binding site" evidence="1">
    <location>
        <position position="98"/>
    </location>
    <ligand>
        <name>substrate</name>
    </ligand>
</feature>
<feature type="binding site" evidence="1">
    <location>
        <begin position="120"/>
        <end position="122"/>
    </location>
    <ligand>
        <name>substrate</name>
    </ligand>
</feature>
<proteinExistence type="inferred from homology"/>
<comment type="function">
    <text evidence="1">Catalyzes the interconversion of beta-pyran and beta-furan forms of D-ribose.</text>
</comment>
<comment type="catalytic activity">
    <reaction evidence="1">
        <text>beta-D-ribopyranose = beta-D-ribofuranose</text>
        <dbReference type="Rhea" id="RHEA:25432"/>
        <dbReference type="ChEBI" id="CHEBI:27476"/>
        <dbReference type="ChEBI" id="CHEBI:47002"/>
        <dbReference type="EC" id="5.4.99.62"/>
    </reaction>
</comment>
<comment type="pathway">
    <text evidence="1">Carbohydrate metabolism; D-ribose degradation; D-ribose 5-phosphate from beta-D-ribopyranose: step 1/2.</text>
</comment>
<comment type="subunit">
    <text evidence="1">Homodecamer.</text>
</comment>
<comment type="subcellular location">
    <subcellularLocation>
        <location evidence="1">Cytoplasm</location>
    </subcellularLocation>
</comment>
<comment type="similarity">
    <text evidence="1">Belongs to the RbsD / FucU family. RbsD subfamily.</text>
</comment>
<gene>
    <name evidence="1" type="primary">rbsD</name>
    <name type="ordered locus">BcerKBAB4_0580</name>
</gene>